<gene>
    <name type="primary">glgA</name>
    <name type="ordered locus">HI_1360</name>
</gene>
<comment type="function">
    <text evidence="1">Synthesizes alpha-1,4-glucan chains using ADP-glucose.</text>
</comment>
<comment type="catalytic activity">
    <reaction>
        <text>[(1-&gt;4)-alpha-D-glucosyl](n) + ADP-alpha-D-glucose = [(1-&gt;4)-alpha-D-glucosyl](n+1) + ADP + H(+)</text>
        <dbReference type="Rhea" id="RHEA:18189"/>
        <dbReference type="Rhea" id="RHEA-COMP:9584"/>
        <dbReference type="Rhea" id="RHEA-COMP:9587"/>
        <dbReference type="ChEBI" id="CHEBI:15378"/>
        <dbReference type="ChEBI" id="CHEBI:15444"/>
        <dbReference type="ChEBI" id="CHEBI:57498"/>
        <dbReference type="ChEBI" id="CHEBI:456216"/>
        <dbReference type="EC" id="2.4.1.21"/>
    </reaction>
</comment>
<comment type="pathway">
    <text>Glycan biosynthesis; glycogen biosynthesis.</text>
</comment>
<comment type="similarity">
    <text evidence="2">Belongs to the glycosyltransferase 1 family. Bacterial/plant glycogen synthase subfamily.</text>
</comment>
<feature type="chain" id="PRO_0000188620" description="Glycogen synthase">
    <location>
        <begin position="1"/>
        <end position="476"/>
    </location>
</feature>
<feature type="binding site" evidence="1">
    <location>
        <position position="15"/>
    </location>
    <ligand>
        <name>ADP-alpha-D-glucose</name>
        <dbReference type="ChEBI" id="CHEBI:57498"/>
    </ligand>
</feature>
<organism>
    <name type="scientific">Haemophilus influenzae (strain ATCC 51907 / DSM 11121 / KW20 / Rd)</name>
    <dbReference type="NCBI Taxonomy" id="71421"/>
    <lineage>
        <taxon>Bacteria</taxon>
        <taxon>Pseudomonadati</taxon>
        <taxon>Pseudomonadota</taxon>
        <taxon>Gammaproteobacteria</taxon>
        <taxon>Pasteurellales</taxon>
        <taxon>Pasteurellaceae</taxon>
        <taxon>Haemophilus</taxon>
    </lineage>
</organism>
<sequence>MKILHVCSELYPLLKTGGLADVLGALPQAQNQIGLDARFLLPAYPAITTGIPNTQVVAEFDNFAGHVVLRYGEYNGVGIYLIDAPHLYGREGNPYHDAYYNDYGDNYKRFALLGWVGAELATGLDSWWRAEVVHAHDWHAGLCVAYLFNKGKPAKSVFTIHNLAYQGQFSYHHLYEIGLPTGMFHVEGLELFGQISYLKSGLFYSDASTAVSPTYAQEITTPEFAYGLQGLLSGLKAQGRLVGILNGVDENIWHPNVDQYIPHHYKLKYMAGKKKNKAELQAYFNLPQDESALAFVMVTRLTEQKGVDLLIESADEIVKQGGQLMILGSGAPHLEQGIRELAERYPQNIAVKIGYDEALSHLMVAGGDVILVPSRFEPCGLTQLYGLQYGTLPLVRKTGGLADTVVDSTSESIKARTATGFVFESATPEALRHCLQRAFALWQKPRAWAMVRTDAMEQDFSWRKAAEQYRTLYERL</sequence>
<evidence type="ECO:0000250" key="1"/>
<evidence type="ECO:0000305" key="2"/>
<dbReference type="EC" id="2.4.1.21"/>
<dbReference type="EMBL" id="L42023">
    <property type="protein sequence ID" value="AAC23007.1"/>
    <property type="molecule type" value="Genomic_DNA"/>
</dbReference>
<dbReference type="PIR" id="C64119">
    <property type="entry name" value="C64119"/>
</dbReference>
<dbReference type="RefSeq" id="NP_439511.1">
    <property type="nucleotide sequence ID" value="NC_000907.1"/>
</dbReference>
<dbReference type="SMR" id="P45179"/>
<dbReference type="STRING" id="71421.HI_1360"/>
<dbReference type="CAZy" id="GT5">
    <property type="family name" value="Glycosyltransferase Family 5"/>
</dbReference>
<dbReference type="DNASU" id="950277"/>
<dbReference type="EnsemblBacteria" id="AAC23007">
    <property type="protein sequence ID" value="AAC23007"/>
    <property type="gene ID" value="HI_1360"/>
</dbReference>
<dbReference type="KEGG" id="hin:HI_1360"/>
<dbReference type="PATRIC" id="fig|71421.8.peg.1413"/>
<dbReference type="eggNOG" id="COG0297">
    <property type="taxonomic scope" value="Bacteria"/>
</dbReference>
<dbReference type="HOGENOM" id="CLU_009583_18_4_6"/>
<dbReference type="OrthoDB" id="9808590at2"/>
<dbReference type="PhylomeDB" id="P45179"/>
<dbReference type="BioCyc" id="HINF71421:G1GJ1-1385-MONOMER"/>
<dbReference type="UniPathway" id="UPA00164"/>
<dbReference type="Proteomes" id="UP000000579">
    <property type="component" value="Chromosome"/>
</dbReference>
<dbReference type="GO" id="GO:0005829">
    <property type="term" value="C:cytosol"/>
    <property type="evidence" value="ECO:0000318"/>
    <property type="project" value="GO_Central"/>
</dbReference>
<dbReference type="GO" id="GO:0009011">
    <property type="term" value="F:alpha-1,4-glucan glucosyltransferase (ADP-glucose donor) activity"/>
    <property type="evidence" value="ECO:0007669"/>
    <property type="project" value="UniProtKB-UniRule"/>
</dbReference>
<dbReference type="GO" id="GO:0004373">
    <property type="term" value="F:alpha-1,4-glucan glucosyltransferase (UDP-glucose donor) activity"/>
    <property type="evidence" value="ECO:0007669"/>
    <property type="project" value="InterPro"/>
</dbReference>
<dbReference type="GO" id="GO:0005978">
    <property type="term" value="P:glycogen biosynthetic process"/>
    <property type="evidence" value="ECO:0000318"/>
    <property type="project" value="GO_Central"/>
</dbReference>
<dbReference type="CDD" id="cd03791">
    <property type="entry name" value="GT5_Glycogen_synthase_DULL1-like"/>
    <property type="match status" value="1"/>
</dbReference>
<dbReference type="FunFam" id="3.40.50.2000:FF:000011">
    <property type="entry name" value="Glycogen synthase"/>
    <property type="match status" value="1"/>
</dbReference>
<dbReference type="Gene3D" id="3.40.50.2000">
    <property type="entry name" value="Glycogen Phosphorylase B"/>
    <property type="match status" value="2"/>
</dbReference>
<dbReference type="HAMAP" id="MF_00484">
    <property type="entry name" value="Glycogen_synth"/>
    <property type="match status" value="1"/>
</dbReference>
<dbReference type="InterPro" id="IPR001296">
    <property type="entry name" value="Glyco_trans_1"/>
</dbReference>
<dbReference type="InterPro" id="IPR011835">
    <property type="entry name" value="GS/SS"/>
</dbReference>
<dbReference type="InterPro" id="IPR013534">
    <property type="entry name" value="Starch_synth_cat_dom"/>
</dbReference>
<dbReference type="NCBIfam" id="TIGR02095">
    <property type="entry name" value="glgA"/>
    <property type="match status" value="1"/>
</dbReference>
<dbReference type="NCBIfam" id="NF001899">
    <property type="entry name" value="PRK00654.1-2"/>
    <property type="match status" value="1"/>
</dbReference>
<dbReference type="PANTHER" id="PTHR45825:SF11">
    <property type="entry name" value="ALPHA AMYLASE DOMAIN-CONTAINING PROTEIN"/>
    <property type="match status" value="1"/>
</dbReference>
<dbReference type="PANTHER" id="PTHR45825">
    <property type="entry name" value="GRANULE-BOUND STARCH SYNTHASE 1, CHLOROPLASTIC/AMYLOPLASTIC"/>
    <property type="match status" value="1"/>
</dbReference>
<dbReference type="Pfam" id="PF08323">
    <property type="entry name" value="Glyco_transf_5"/>
    <property type="match status" value="1"/>
</dbReference>
<dbReference type="Pfam" id="PF00534">
    <property type="entry name" value="Glycos_transf_1"/>
    <property type="match status" value="1"/>
</dbReference>
<dbReference type="SUPFAM" id="SSF53756">
    <property type="entry name" value="UDP-Glycosyltransferase/glycogen phosphorylase"/>
    <property type="match status" value="1"/>
</dbReference>
<keyword id="KW-0320">Glycogen biosynthesis</keyword>
<keyword id="KW-0328">Glycosyltransferase</keyword>
<keyword id="KW-1185">Reference proteome</keyword>
<keyword id="KW-0808">Transferase</keyword>
<name>GLGA_HAEIN</name>
<protein>
    <recommendedName>
        <fullName>Glycogen synthase</fullName>
        <ecNumber>2.4.1.21</ecNumber>
    </recommendedName>
    <alternativeName>
        <fullName>Starch [bacterial glycogen] synthase</fullName>
    </alternativeName>
</protein>
<reference key="1">
    <citation type="journal article" date="1995" name="Science">
        <title>Whole-genome random sequencing and assembly of Haemophilus influenzae Rd.</title>
        <authorList>
            <person name="Fleischmann R.D."/>
            <person name="Adams M.D."/>
            <person name="White O."/>
            <person name="Clayton R.A."/>
            <person name="Kirkness E.F."/>
            <person name="Kerlavage A.R."/>
            <person name="Bult C.J."/>
            <person name="Tomb J.-F."/>
            <person name="Dougherty B.A."/>
            <person name="Merrick J.M."/>
            <person name="McKenney K."/>
            <person name="Sutton G.G."/>
            <person name="FitzHugh W."/>
            <person name="Fields C.A."/>
            <person name="Gocayne J.D."/>
            <person name="Scott J.D."/>
            <person name="Shirley R."/>
            <person name="Liu L.-I."/>
            <person name="Glodek A."/>
            <person name="Kelley J.M."/>
            <person name="Weidman J.F."/>
            <person name="Phillips C.A."/>
            <person name="Spriggs T."/>
            <person name="Hedblom E."/>
            <person name="Cotton M.D."/>
            <person name="Utterback T.R."/>
            <person name="Hanna M.C."/>
            <person name="Nguyen D.T."/>
            <person name="Saudek D.M."/>
            <person name="Brandon R.C."/>
            <person name="Fine L.D."/>
            <person name="Fritchman J.L."/>
            <person name="Fuhrmann J.L."/>
            <person name="Geoghagen N.S.M."/>
            <person name="Gnehm C.L."/>
            <person name="McDonald L.A."/>
            <person name="Small K.V."/>
            <person name="Fraser C.M."/>
            <person name="Smith H.O."/>
            <person name="Venter J.C."/>
        </authorList>
    </citation>
    <scope>NUCLEOTIDE SEQUENCE [LARGE SCALE GENOMIC DNA]</scope>
    <source>
        <strain>ATCC 51907 / DSM 11121 / KW20 / Rd</strain>
    </source>
</reference>
<proteinExistence type="inferred from homology"/>
<accession>P45179</accession>